<reference key="1">
    <citation type="journal article" date="2005" name="J. Bacteriol.">
        <title>Insights into genome plasticity and pathogenicity of the plant pathogenic Bacterium Xanthomonas campestris pv. vesicatoria revealed by the complete genome sequence.</title>
        <authorList>
            <person name="Thieme F."/>
            <person name="Koebnik R."/>
            <person name="Bekel T."/>
            <person name="Berger C."/>
            <person name="Boch J."/>
            <person name="Buettner D."/>
            <person name="Caldana C."/>
            <person name="Gaigalat L."/>
            <person name="Goesmann A."/>
            <person name="Kay S."/>
            <person name="Kirchner O."/>
            <person name="Lanz C."/>
            <person name="Linke B."/>
            <person name="McHardy A.C."/>
            <person name="Meyer F."/>
            <person name="Mittenhuber G."/>
            <person name="Nies D.H."/>
            <person name="Niesbach-Kloesgen U."/>
            <person name="Patschkowski T."/>
            <person name="Rueckert C."/>
            <person name="Rupp O."/>
            <person name="Schneiker S."/>
            <person name="Schuster S.C."/>
            <person name="Vorhoelter F.J."/>
            <person name="Weber E."/>
            <person name="Puehler A."/>
            <person name="Bonas U."/>
            <person name="Bartels D."/>
            <person name="Kaiser O."/>
        </authorList>
    </citation>
    <scope>NUCLEOTIDE SEQUENCE [LARGE SCALE GENOMIC DNA]</scope>
    <source>
        <strain>85-10</strain>
    </source>
</reference>
<feature type="chain" id="PRO_0000224238" description="Chaperone protein HtpG">
    <location>
        <begin position="1"/>
        <end position="634"/>
    </location>
</feature>
<feature type="region of interest" description="A; substrate-binding" evidence="1">
    <location>
        <begin position="1"/>
        <end position="342"/>
    </location>
</feature>
<feature type="region of interest" description="B" evidence="1">
    <location>
        <begin position="343"/>
        <end position="559"/>
    </location>
</feature>
<feature type="region of interest" description="C" evidence="1">
    <location>
        <begin position="560"/>
        <end position="634"/>
    </location>
</feature>
<dbReference type="EMBL" id="AM039952">
    <property type="protein sequence ID" value="CAJ24388.1"/>
    <property type="molecule type" value="Genomic_DNA"/>
</dbReference>
<dbReference type="RefSeq" id="WP_011347837.1">
    <property type="nucleotide sequence ID" value="NZ_CP017190.1"/>
</dbReference>
<dbReference type="SMR" id="Q3BS21"/>
<dbReference type="STRING" id="456327.BJD11_09300"/>
<dbReference type="KEGG" id="xcv:XCV2711"/>
<dbReference type="eggNOG" id="COG0326">
    <property type="taxonomic scope" value="Bacteria"/>
</dbReference>
<dbReference type="HOGENOM" id="CLU_006684_3_0_6"/>
<dbReference type="Proteomes" id="UP000007069">
    <property type="component" value="Chromosome"/>
</dbReference>
<dbReference type="GO" id="GO:0005737">
    <property type="term" value="C:cytoplasm"/>
    <property type="evidence" value="ECO:0007669"/>
    <property type="project" value="UniProtKB-SubCell"/>
</dbReference>
<dbReference type="GO" id="GO:0005524">
    <property type="term" value="F:ATP binding"/>
    <property type="evidence" value="ECO:0007669"/>
    <property type="project" value="UniProtKB-UniRule"/>
</dbReference>
<dbReference type="GO" id="GO:0016887">
    <property type="term" value="F:ATP hydrolysis activity"/>
    <property type="evidence" value="ECO:0007669"/>
    <property type="project" value="InterPro"/>
</dbReference>
<dbReference type="GO" id="GO:0140662">
    <property type="term" value="F:ATP-dependent protein folding chaperone"/>
    <property type="evidence" value="ECO:0007669"/>
    <property type="project" value="InterPro"/>
</dbReference>
<dbReference type="GO" id="GO:0051082">
    <property type="term" value="F:unfolded protein binding"/>
    <property type="evidence" value="ECO:0007669"/>
    <property type="project" value="UniProtKB-UniRule"/>
</dbReference>
<dbReference type="CDD" id="cd16927">
    <property type="entry name" value="HATPase_Hsp90-like"/>
    <property type="match status" value="1"/>
</dbReference>
<dbReference type="FunFam" id="1.20.120.790:FF:000008">
    <property type="entry name" value="Chaperone protein HtpG"/>
    <property type="match status" value="1"/>
</dbReference>
<dbReference type="FunFam" id="3.30.230.80:FF:000002">
    <property type="entry name" value="Molecular chaperone HtpG"/>
    <property type="match status" value="1"/>
</dbReference>
<dbReference type="FunFam" id="3.30.565.10:FF:000009">
    <property type="entry name" value="Molecular chaperone HtpG"/>
    <property type="match status" value="1"/>
</dbReference>
<dbReference type="Gene3D" id="3.30.230.80">
    <property type="match status" value="1"/>
</dbReference>
<dbReference type="Gene3D" id="3.40.50.11260">
    <property type="match status" value="1"/>
</dbReference>
<dbReference type="Gene3D" id="1.20.120.790">
    <property type="entry name" value="Heat shock protein 90, C-terminal domain"/>
    <property type="match status" value="1"/>
</dbReference>
<dbReference type="Gene3D" id="3.30.565.10">
    <property type="entry name" value="Histidine kinase-like ATPase, C-terminal domain"/>
    <property type="match status" value="1"/>
</dbReference>
<dbReference type="HAMAP" id="MF_00505">
    <property type="entry name" value="HSP90"/>
    <property type="match status" value="1"/>
</dbReference>
<dbReference type="InterPro" id="IPR036890">
    <property type="entry name" value="HATPase_C_sf"/>
</dbReference>
<dbReference type="InterPro" id="IPR019805">
    <property type="entry name" value="Heat_shock_protein_90_CS"/>
</dbReference>
<dbReference type="InterPro" id="IPR037196">
    <property type="entry name" value="HSP90_C"/>
</dbReference>
<dbReference type="InterPro" id="IPR001404">
    <property type="entry name" value="Hsp90_fam"/>
</dbReference>
<dbReference type="InterPro" id="IPR020575">
    <property type="entry name" value="Hsp90_N"/>
</dbReference>
<dbReference type="InterPro" id="IPR020568">
    <property type="entry name" value="Ribosomal_Su5_D2-typ_SF"/>
</dbReference>
<dbReference type="NCBIfam" id="NF003555">
    <property type="entry name" value="PRK05218.1"/>
    <property type="match status" value="1"/>
</dbReference>
<dbReference type="PANTHER" id="PTHR11528">
    <property type="entry name" value="HEAT SHOCK PROTEIN 90 FAMILY MEMBER"/>
    <property type="match status" value="1"/>
</dbReference>
<dbReference type="Pfam" id="PF13589">
    <property type="entry name" value="HATPase_c_3"/>
    <property type="match status" value="1"/>
</dbReference>
<dbReference type="Pfam" id="PF00183">
    <property type="entry name" value="HSP90"/>
    <property type="match status" value="1"/>
</dbReference>
<dbReference type="PIRSF" id="PIRSF002583">
    <property type="entry name" value="Hsp90"/>
    <property type="match status" value="1"/>
</dbReference>
<dbReference type="PRINTS" id="PR00775">
    <property type="entry name" value="HEATSHOCK90"/>
</dbReference>
<dbReference type="SMART" id="SM00387">
    <property type="entry name" value="HATPase_c"/>
    <property type="match status" value="1"/>
</dbReference>
<dbReference type="SUPFAM" id="SSF55874">
    <property type="entry name" value="ATPase domain of HSP90 chaperone/DNA topoisomerase II/histidine kinase"/>
    <property type="match status" value="1"/>
</dbReference>
<dbReference type="SUPFAM" id="SSF110942">
    <property type="entry name" value="HSP90 C-terminal domain"/>
    <property type="match status" value="1"/>
</dbReference>
<dbReference type="SUPFAM" id="SSF54211">
    <property type="entry name" value="Ribosomal protein S5 domain 2-like"/>
    <property type="match status" value="1"/>
</dbReference>
<dbReference type="PROSITE" id="PS00298">
    <property type="entry name" value="HSP90"/>
    <property type="match status" value="1"/>
</dbReference>
<organism>
    <name type="scientific">Xanthomonas euvesicatoria pv. vesicatoria (strain 85-10)</name>
    <name type="common">Xanthomonas campestris pv. vesicatoria</name>
    <dbReference type="NCBI Taxonomy" id="316273"/>
    <lineage>
        <taxon>Bacteria</taxon>
        <taxon>Pseudomonadati</taxon>
        <taxon>Pseudomonadota</taxon>
        <taxon>Gammaproteobacteria</taxon>
        <taxon>Lysobacterales</taxon>
        <taxon>Lysobacteraceae</taxon>
        <taxon>Xanthomonas</taxon>
    </lineage>
</organism>
<sequence length="634" mass="70868">MTVETDKQTLGFQTEVKQLLQLMIHSLYSNKEIFLRELVSNAADAADKLRFEALVKPELLEGSGELRIRVDYDKDARTVTIDDNGIGMSREEAVSHLGTIAKSGTADFLKHLSGDQKKDANLIGQFGVGFYSAFIVADQVDVYSRRAGLPASEGVHWSSRGEGEFEIASVDKPERGTRIVLHLKEGEESFADGWTLRGILKKYSDHIGLPIEMRKEHYGEAADKPAEPEWEAVNRASALWTRPKSEIKDEEYQEFYKHIAHDAGNPLAWSHNKVEGKLEYTSLLFVPGRAPFDLYHRDSAKGLKLYVQRVFIMDQAEQFLPLYLRFIKGVVDSSDLSLNVSREILQSGPVVDSMKSALTKRSLDMLEKLAKDKPDDYATFWRNFGQALKEGPAEDYANREKIAGLLRFSSTHDTTGAQSVGLADYVSRLAEGQDKLYYLTGESYAQIKDSPHLEVFRKKGIEVLLLTDRIDEWLMSYLTEFDGKSFVDVARGDLDLGKLDSEEDKKAQEDLAKSKEGLASRIKAALGDDVAEVRVSHRLTDSPAILAIGQGDLGLQMRQLLEASGQAVPESKPVFEFNPTHPLIEKLDAEQDMDRFGDLSRVLFDQAALAAGDSLKDPAAYVRRLNKLLLELSV</sequence>
<protein>
    <recommendedName>
        <fullName evidence="1">Chaperone protein HtpG</fullName>
    </recommendedName>
    <alternativeName>
        <fullName evidence="1">Heat shock protein HtpG</fullName>
    </alternativeName>
    <alternativeName>
        <fullName evidence="1">High temperature protein G</fullName>
    </alternativeName>
</protein>
<name>HTPG_XANE5</name>
<comment type="function">
    <text evidence="1">Molecular chaperone. Has ATPase activity.</text>
</comment>
<comment type="subunit">
    <text evidence="1">Homodimer.</text>
</comment>
<comment type="subcellular location">
    <subcellularLocation>
        <location evidence="1">Cytoplasm</location>
    </subcellularLocation>
</comment>
<comment type="similarity">
    <text evidence="1">Belongs to the heat shock protein 90 family.</text>
</comment>
<proteinExistence type="inferred from homology"/>
<evidence type="ECO:0000255" key="1">
    <source>
        <dbReference type="HAMAP-Rule" id="MF_00505"/>
    </source>
</evidence>
<keyword id="KW-0067">ATP-binding</keyword>
<keyword id="KW-0143">Chaperone</keyword>
<keyword id="KW-0963">Cytoplasm</keyword>
<keyword id="KW-0547">Nucleotide-binding</keyword>
<keyword id="KW-0346">Stress response</keyword>
<gene>
    <name evidence="1" type="primary">htpG</name>
    <name type="ordered locus">XCV2711</name>
</gene>
<accession>Q3BS21</accession>